<accession>P0CD56</accession>
<accession>Q0ZIV8</accession>
<sequence length="510" mass="56497">MIWHIQNENFILDSTRIFMKAFHLLLFDGSFIFPECILIFGLILLLMIDSTSDQKDIPWLYFISSTSLVMSITALLFRWREEPMISFSGNFQTNNFNEIFQFLILLCSTLCIPLSVEYIECTEMAITEFLLFVLTATLGGMFLCGANDLITIFVAPECFSLCSYLLSGYTKKDVRSNEATTKYLLMGGASSSILVHGFSWLYGSSGGEIELQEIVNGLINTQMYNSPGISIALIFITVGIGFKLSPAPSHQWTPDVYEGSPTPVVAFLSVTSKVAASASATRIFDIPFYFSSNEWHLLLEILAILSMILGNLIAITQTSMKRMLAYSSIGQIGYVIIGIIVGDSNGGYASMITYMLFYISMNLGTFACIVSFGLRTGTDNIRDYAGLYTKDPFLALSLALCLLSLGGLPPLAGFFGKLHLFWCGWQAGLYFLVSIGLLTSVVSIYYYLKIIKLLMTGRNQEITPHVRNYIRSPLRSNNSIELSMIVCVIASTIPGISMNPIIAIAQDTLF</sequence>
<name>NU2C1_VITVI</name>
<dbReference type="EC" id="7.1.1.-" evidence="1"/>
<dbReference type="EMBL" id="DQ424856">
    <property type="protein sequence ID" value="ABE47579.1"/>
    <property type="molecule type" value="Genomic_DNA"/>
</dbReference>
<dbReference type="SMR" id="P0CD56"/>
<dbReference type="FunCoup" id="P0CD56">
    <property type="interactions" value="23"/>
</dbReference>
<dbReference type="STRING" id="29760.P0CD56"/>
<dbReference type="PaxDb" id="29760-VIT_14s0108g01640.t01"/>
<dbReference type="KEGG" id="vvi:4025014"/>
<dbReference type="KEGG" id="vvi:4025030"/>
<dbReference type="eggNOG" id="KOG4668">
    <property type="taxonomic scope" value="Eukaryota"/>
</dbReference>
<dbReference type="InParanoid" id="P0CD56"/>
<dbReference type="OrthoDB" id="916715at71240"/>
<dbReference type="Proteomes" id="UP000009183">
    <property type="component" value="Chloroplast"/>
</dbReference>
<dbReference type="ExpressionAtlas" id="P0CD56">
    <property type="expression patterns" value="baseline and differential"/>
</dbReference>
<dbReference type="GO" id="GO:0009535">
    <property type="term" value="C:chloroplast thylakoid membrane"/>
    <property type="evidence" value="ECO:0007669"/>
    <property type="project" value="UniProtKB-SubCell"/>
</dbReference>
<dbReference type="GO" id="GO:0008137">
    <property type="term" value="F:NADH dehydrogenase (ubiquinone) activity"/>
    <property type="evidence" value="ECO:0007669"/>
    <property type="project" value="InterPro"/>
</dbReference>
<dbReference type="GO" id="GO:0048038">
    <property type="term" value="F:quinone binding"/>
    <property type="evidence" value="ECO:0007669"/>
    <property type="project" value="UniProtKB-KW"/>
</dbReference>
<dbReference type="GO" id="GO:0042773">
    <property type="term" value="P:ATP synthesis coupled electron transport"/>
    <property type="evidence" value="ECO:0007669"/>
    <property type="project" value="InterPro"/>
</dbReference>
<dbReference type="GO" id="GO:0019684">
    <property type="term" value="P:photosynthesis, light reaction"/>
    <property type="evidence" value="ECO:0007669"/>
    <property type="project" value="UniProtKB-UniRule"/>
</dbReference>
<dbReference type="HAMAP" id="MF_00445">
    <property type="entry name" value="NDH1_NuoN_1"/>
    <property type="match status" value="1"/>
</dbReference>
<dbReference type="InterPro" id="IPR010096">
    <property type="entry name" value="NADH-Q_OxRdtase_suN/2"/>
</dbReference>
<dbReference type="InterPro" id="IPR001750">
    <property type="entry name" value="ND/Mrp_TM"/>
</dbReference>
<dbReference type="InterPro" id="IPR045693">
    <property type="entry name" value="Ndh2_N"/>
</dbReference>
<dbReference type="NCBIfam" id="TIGR01770">
    <property type="entry name" value="NDH_I_N"/>
    <property type="match status" value="1"/>
</dbReference>
<dbReference type="NCBIfam" id="NF002701">
    <property type="entry name" value="PRK02504.1"/>
    <property type="match status" value="1"/>
</dbReference>
<dbReference type="PANTHER" id="PTHR22773">
    <property type="entry name" value="NADH DEHYDROGENASE"/>
    <property type="match status" value="1"/>
</dbReference>
<dbReference type="Pfam" id="PF19530">
    <property type="entry name" value="Ndh2_N"/>
    <property type="match status" value="1"/>
</dbReference>
<dbReference type="Pfam" id="PF00361">
    <property type="entry name" value="Proton_antipo_M"/>
    <property type="match status" value="1"/>
</dbReference>
<dbReference type="PRINTS" id="PR01434">
    <property type="entry name" value="NADHDHGNASE5"/>
</dbReference>
<organism>
    <name type="scientific">Vitis vinifera</name>
    <name type="common">Grape</name>
    <dbReference type="NCBI Taxonomy" id="29760"/>
    <lineage>
        <taxon>Eukaryota</taxon>
        <taxon>Viridiplantae</taxon>
        <taxon>Streptophyta</taxon>
        <taxon>Embryophyta</taxon>
        <taxon>Tracheophyta</taxon>
        <taxon>Spermatophyta</taxon>
        <taxon>Magnoliopsida</taxon>
        <taxon>eudicotyledons</taxon>
        <taxon>Gunneridae</taxon>
        <taxon>Pentapetalae</taxon>
        <taxon>rosids</taxon>
        <taxon>Vitales</taxon>
        <taxon>Vitaceae</taxon>
        <taxon>Viteae</taxon>
        <taxon>Vitis</taxon>
    </lineage>
</organism>
<geneLocation type="chloroplast"/>
<protein>
    <recommendedName>
        <fullName evidence="1">NAD(P)H-quinone oxidoreductase subunit 2 A, chloroplastic</fullName>
        <ecNumber evidence="1">7.1.1.-</ecNumber>
    </recommendedName>
    <alternativeName>
        <fullName evidence="1">NAD(P)H dehydrogenase, subunit 2 A</fullName>
    </alternativeName>
    <alternativeName>
        <fullName evidence="1">NADH-plastoquinone oxidoreductase subunit 2 A</fullName>
    </alternativeName>
</protein>
<keyword id="KW-0150">Chloroplast</keyword>
<keyword id="KW-0472">Membrane</keyword>
<keyword id="KW-0520">NAD</keyword>
<keyword id="KW-0521">NADP</keyword>
<keyword id="KW-0934">Plastid</keyword>
<keyword id="KW-0618">Plastoquinone</keyword>
<keyword id="KW-0874">Quinone</keyword>
<keyword id="KW-1185">Reference proteome</keyword>
<keyword id="KW-0793">Thylakoid</keyword>
<keyword id="KW-1278">Translocase</keyword>
<keyword id="KW-0812">Transmembrane</keyword>
<keyword id="KW-1133">Transmembrane helix</keyword>
<keyword id="KW-0813">Transport</keyword>
<feature type="chain" id="PRO_0000275609" description="NAD(P)H-quinone oxidoreductase subunit 2 A, chloroplastic">
    <location>
        <begin position="1"/>
        <end position="510"/>
    </location>
</feature>
<feature type="transmembrane region" description="Helical" evidence="1">
    <location>
        <begin position="24"/>
        <end position="44"/>
    </location>
</feature>
<feature type="transmembrane region" description="Helical" evidence="1">
    <location>
        <begin position="57"/>
        <end position="77"/>
    </location>
</feature>
<feature type="transmembrane region" description="Helical" evidence="1">
    <location>
        <begin position="99"/>
        <end position="119"/>
    </location>
</feature>
<feature type="transmembrane region" description="Helical" evidence="1">
    <location>
        <begin position="124"/>
        <end position="144"/>
    </location>
</feature>
<feature type="transmembrane region" description="Helical" evidence="1">
    <location>
        <begin position="149"/>
        <end position="169"/>
    </location>
</feature>
<feature type="transmembrane region" description="Helical" evidence="1">
    <location>
        <begin position="183"/>
        <end position="203"/>
    </location>
</feature>
<feature type="transmembrane region" description="Helical" evidence="1">
    <location>
        <begin position="227"/>
        <end position="247"/>
    </location>
</feature>
<feature type="transmembrane region" description="Helical" evidence="1">
    <location>
        <begin position="295"/>
        <end position="315"/>
    </location>
</feature>
<feature type="transmembrane region" description="Helical" evidence="1">
    <location>
        <begin position="323"/>
        <end position="343"/>
    </location>
</feature>
<feature type="transmembrane region" description="Helical" evidence="1">
    <location>
        <begin position="354"/>
        <end position="374"/>
    </location>
</feature>
<feature type="transmembrane region" description="Helical" evidence="1">
    <location>
        <begin position="395"/>
        <end position="415"/>
    </location>
</feature>
<feature type="transmembrane region" description="Helical" evidence="1">
    <location>
        <begin position="418"/>
        <end position="438"/>
    </location>
</feature>
<feature type="transmembrane region" description="Helical" evidence="1">
    <location>
        <begin position="484"/>
        <end position="504"/>
    </location>
</feature>
<reference key="1">
    <citation type="journal article" date="2006" name="BMC Evol. Biol.">
        <title>Phylogenetic analyses of Vitis (Vitaceae) based on complete chloroplast genome sequences: effects of taxon sampling and phylogenetic methods on resolving relationships among rosids.</title>
        <authorList>
            <person name="Jansen R.K."/>
            <person name="Kaittanis C."/>
            <person name="Lee S.-B."/>
            <person name="Saski C."/>
            <person name="Tomkins J."/>
            <person name="Alverson A.J."/>
            <person name="Daniell H."/>
        </authorList>
    </citation>
    <scope>NUCLEOTIDE SEQUENCE [LARGE SCALE GENOMIC DNA]</scope>
    <source>
        <strain>cv. Maxxa</strain>
    </source>
</reference>
<proteinExistence type="inferred from homology"/>
<evidence type="ECO:0000255" key="1">
    <source>
        <dbReference type="HAMAP-Rule" id="MF_00445"/>
    </source>
</evidence>
<gene>
    <name evidence="1" type="primary">ndhB1</name>
</gene>
<comment type="function">
    <text evidence="1">NDH shuttles electrons from NAD(P)H:plastoquinone, via FMN and iron-sulfur (Fe-S) centers, to quinones in the photosynthetic chain and possibly in a chloroplast respiratory chain. The immediate electron acceptor for the enzyme in this species is believed to be plastoquinone. Couples the redox reaction to proton translocation, and thus conserves the redox energy in a proton gradient.</text>
</comment>
<comment type="catalytic activity">
    <reaction evidence="1">
        <text>a plastoquinone + NADH + (n+1) H(+)(in) = a plastoquinol + NAD(+) + n H(+)(out)</text>
        <dbReference type="Rhea" id="RHEA:42608"/>
        <dbReference type="Rhea" id="RHEA-COMP:9561"/>
        <dbReference type="Rhea" id="RHEA-COMP:9562"/>
        <dbReference type="ChEBI" id="CHEBI:15378"/>
        <dbReference type="ChEBI" id="CHEBI:17757"/>
        <dbReference type="ChEBI" id="CHEBI:57540"/>
        <dbReference type="ChEBI" id="CHEBI:57945"/>
        <dbReference type="ChEBI" id="CHEBI:62192"/>
    </reaction>
</comment>
<comment type="catalytic activity">
    <reaction evidence="1">
        <text>a plastoquinone + NADPH + (n+1) H(+)(in) = a plastoquinol + NADP(+) + n H(+)(out)</text>
        <dbReference type="Rhea" id="RHEA:42612"/>
        <dbReference type="Rhea" id="RHEA-COMP:9561"/>
        <dbReference type="Rhea" id="RHEA-COMP:9562"/>
        <dbReference type="ChEBI" id="CHEBI:15378"/>
        <dbReference type="ChEBI" id="CHEBI:17757"/>
        <dbReference type="ChEBI" id="CHEBI:57783"/>
        <dbReference type="ChEBI" id="CHEBI:58349"/>
        <dbReference type="ChEBI" id="CHEBI:62192"/>
    </reaction>
</comment>
<comment type="subunit">
    <text evidence="1">NDH is composed of at least 16 different subunits, 5 of which are encoded in the nucleus.</text>
</comment>
<comment type="subcellular location">
    <subcellularLocation>
        <location evidence="1">Plastid</location>
        <location evidence="1">Chloroplast thylakoid membrane</location>
        <topology evidence="1">Multi-pass membrane protein</topology>
    </subcellularLocation>
</comment>
<comment type="similarity">
    <text evidence="1">Belongs to the complex I subunit 2 family.</text>
</comment>